<reference key="1">
    <citation type="submission" date="2006-10" db="EMBL/GenBank/DDBJ databases">
        <authorList>
            <consortium name="Sanger Xenopus tropicalis EST/cDNA project"/>
        </authorList>
    </citation>
    <scope>NUCLEOTIDE SEQUENCE [LARGE SCALE MRNA] OF 1-414</scope>
    <source>
        <tissue>Gastrula</tissue>
    </source>
</reference>
<reference key="2">
    <citation type="submission" date="2005-02" db="EMBL/GenBank/DDBJ databases">
        <authorList>
            <consortium name="NIH - Xenopus Gene Collection (XGC) project"/>
        </authorList>
    </citation>
    <scope>NUCLEOTIDE SEQUENCE [LARGE SCALE MRNA]</scope>
    <source>
        <strain>F6</strain>
        <tissue>Embryo</tissue>
    </source>
</reference>
<accession>Q5FW46</accession>
<accession>Q28FX9</accession>
<protein>
    <recommendedName>
        <fullName>Atos homolog protein A</fullName>
    </recommendedName>
</protein>
<evidence type="ECO:0000250" key="1">
    <source>
        <dbReference type="UniProtKB" id="Q69ZK7"/>
    </source>
</evidence>
<evidence type="ECO:0000250" key="2">
    <source>
        <dbReference type="UniProtKB" id="Q7JXG9"/>
    </source>
</evidence>
<evidence type="ECO:0000256" key="3">
    <source>
        <dbReference type="SAM" id="MobiDB-lite"/>
    </source>
</evidence>
<evidence type="ECO:0000305" key="4"/>
<comment type="function">
    <text evidence="1">Transcription regulator that syncronizes transcriptional and translational programs to promote macrophage invasion of tissues.</text>
</comment>
<comment type="subcellular location">
    <subcellularLocation>
        <location evidence="2">Nucleus</location>
    </subcellularLocation>
</comment>
<comment type="domain">
    <text evidence="1">The protein contains 2 transactivation domains (TAD). Each of these domains may be required for transcriptional activation of a subset of target genes.</text>
</comment>
<comment type="similarity">
    <text evidence="4">Belongs to the ATOS family.</text>
</comment>
<sequence length="946" mass="105984">MKPDRDSLDEFFEYEAEDFLVYLALLITEGRTPEHSVKGRTEGPHCPPAQLSQPAPNKHECSDKLAQCREARKTRSEVAFLWRNNIPIMVEVMLLPDCCYSDEGANTDGNDLNDPALKQDALLLERWTLEPVPRQSGDRFIEEKTLLLAVRSFVFFSQLSAWLSVSHGAVPRNILYRVSAADEELKLNFSHSPTEHVFPVPNVSHNVALKVSVQSLPRQSSYPVLNCSIHSNLGFYEKKILPREHSVTQPHNSQDNDQNSAPVSQHAFTKPSWSVGPEGLLHARTNVSTDLSLPVRNSKLLSTVDKGYSIGTPPSKHQCFSMTGNYKAAPQEPVRNFKSFSLVGVPCSPQASQTVETNPLIGSLIQERQEVIARIAQHLLQCDQTSSQINSHSIINELSSINGKIKNSSEDEKFQKKNKESPPICTSTLALTLSTGNQISNLKKAPDTPINSSRPILEFHTSPNPQARRKLILFESNEHFCNPFQSSGQSTVPSSNNENINKLPEKRDIKQSEHGEISTRTGNQLSNSCNTNDRLCTNTQIVPEDKSCTDSFHKPQKDNPKICSQKVGHRNGQAQETTCRETRKSDHSNQLLSIENCINKDRDNIQYKEPQDKLKSVHDENEDPTNCDCLAQGQRKCNGNCLQRSESLKNTEQKPIQLRHSCTWKKQTFRSLDGISTKAFHPRTGLPLLSSPVPQRKTQSGYFDLDNSLLKLKGLSTQRQHVNGFTDEDTVATNKQLSSSAPPAPCLSLLGNFEESVLNYRFEPLGVVEGFTAEVGASGIFCPTHMTLPVKVSFYSVSDDNAPSPYMGNITLESLGKRGYRIPPSGTIQVTLFNPNKTVVKMFVVKYDLRDMPANHQTFLRQRTFSVPVRRETKGAVTENGLKAEDRTLRYLIHLRFQSSKSGKIYLHRDVRLLFSRKSMEVDSGAAYELKSYIETPTNPQYSPRC</sequence>
<feature type="chain" id="PRO_0000315617" description="Atos homolog protein A">
    <location>
        <begin position="1"/>
        <end position="946"/>
    </location>
</feature>
<feature type="region of interest" description="Transactivation domain 1 (TAD1)" evidence="1">
    <location>
        <begin position="24"/>
        <end position="32"/>
    </location>
</feature>
<feature type="region of interest" description="Disordered" evidence="3">
    <location>
        <begin position="34"/>
        <end position="58"/>
    </location>
</feature>
<feature type="region of interest" description="Disordered" evidence="3">
    <location>
        <begin position="246"/>
        <end position="271"/>
    </location>
</feature>
<feature type="region of interest" description="Disordered" evidence="3">
    <location>
        <begin position="484"/>
        <end position="524"/>
    </location>
</feature>
<feature type="region of interest" description="Disordered" evidence="3">
    <location>
        <begin position="547"/>
        <end position="567"/>
    </location>
</feature>
<feature type="region of interest" description="Required for macropage invasion" evidence="1">
    <location>
        <begin position="749"/>
        <end position="806"/>
    </location>
</feature>
<feature type="region of interest" description="Transactivation domain 2 (TAD2)" evidence="1">
    <location>
        <begin position="833"/>
        <end position="841"/>
    </location>
</feature>
<feature type="compositionally biased region" description="Basic and acidic residues" evidence="3">
    <location>
        <begin position="34"/>
        <end position="43"/>
    </location>
</feature>
<feature type="compositionally biased region" description="Polar residues" evidence="3">
    <location>
        <begin position="247"/>
        <end position="267"/>
    </location>
</feature>
<feature type="compositionally biased region" description="Polar residues" evidence="3">
    <location>
        <begin position="484"/>
        <end position="500"/>
    </location>
</feature>
<feature type="compositionally biased region" description="Basic and acidic residues" evidence="3">
    <location>
        <begin position="503"/>
        <end position="517"/>
    </location>
</feature>
<feature type="compositionally biased region" description="Basic and acidic residues" evidence="3">
    <location>
        <begin position="547"/>
        <end position="560"/>
    </location>
</feature>
<gene>
    <name type="primary">atosa</name>
    <name type="synonym">fam214a</name>
    <name type="ORF">TGas096p02.1</name>
</gene>
<name>ATOSA_XENTR</name>
<proteinExistence type="evidence at transcript level"/>
<keyword id="KW-0539">Nucleus</keyword>
<keyword id="KW-1185">Reference proteome</keyword>
<organism>
    <name type="scientific">Xenopus tropicalis</name>
    <name type="common">Western clawed frog</name>
    <name type="synonym">Silurana tropicalis</name>
    <dbReference type="NCBI Taxonomy" id="8364"/>
    <lineage>
        <taxon>Eukaryota</taxon>
        <taxon>Metazoa</taxon>
        <taxon>Chordata</taxon>
        <taxon>Craniata</taxon>
        <taxon>Vertebrata</taxon>
        <taxon>Euteleostomi</taxon>
        <taxon>Amphibia</taxon>
        <taxon>Batrachia</taxon>
        <taxon>Anura</taxon>
        <taxon>Pipoidea</taxon>
        <taxon>Pipidae</taxon>
        <taxon>Xenopodinae</taxon>
        <taxon>Xenopus</taxon>
        <taxon>Silurana</taxon>
    </lineage>
</organism>
<dbReference type="EMBL" id="CR761683">
    <property type="protein sequence ID" value="CAJ83444.1"/>
    <property type="molecule type" value="mRNA"/>
</dbReference>
<dbReference type="EMBL" id="BC089633">
    <property type="protein sequence ID" value="AAH89633.1"/>
    <property type="molecule type" value="mRNA"/>
</dbReference>
<dbReference type="RefSeq" id="NP_001015702.1">
    <property type="nucleotide sequence ID" value="NM_001015702.1"/>
</dbReference>
<dbReference type="FunCoup" id="Q5FW46">
    <property type="interactions" value="681"/>
</dbReference>
<dbReference type="STRING" id="8364.ENSXETP00000043933"/>
<dbReference type="PaxDb" id="8364-ENSXETP00000056804"/>
<dbReference type="GeneID" id="548419"/>
<dbReference type="KEGG" id="xtr:548419"/>
<dbReference type="AGR" id="Xenbase:XB-GENE-5816685"/>
<dbReference type="CTD" id="56204"/>
<dbReference type="Xenbase" id="XB-GENE-5816685">
    <property type="gene designation" value="atosa"/>
</dbReference>
<dbReference type="eggNOG" id="KOG2306">
    <property type="taxonomic scope" value="Eukaryota"/>
</dbReference>
<dbReference type="HOGENOM" id="CLU_011957_0_0_1"/>
<dbReference type="InParanoid" id="Q5FW46"/>
<dbReference type="OMA" id="QTHPRSQ"/>
<dbReference type="OrthoDB" id="8625101at2759"/>
<dbReference type="PhylomeDB" id="Q5FW46"/>
<dbReference type="TreeFam" id="TF325496"/>
<dbReference type="Proteomes" id="UP000008143">
    <property type="component" value="Chromosome 3"/>
</dbReference>
<dbReference type="Bgee" id="ENSXETG00000006354">
    <property type="expression patterns" value="Expressed in skeletal muscle tissue and 15 other cell types or tissues"/>
</dbReference>
<dbReference type="ExpressionAtlas" id="Q5FW46">
    <property type="expression patterns" value="differential"/>
</dbReference>
<dbReference type="GO" id="GO:0005634">
    <property type="term" value="C:nucleus"/>
    <property type="evidence" value="ECO:0007669"/>
    <property type="project" value="UniProtKB-SubCell"/>
</dbReference>
<dbReference type="GO" id="GO:0001702">
    <property type="term" value="P:gastrulation with mouth forming second"/>
    <property type="evidence" value="ECO:0000315"/>
    <property type="project" value="Xenbase"/>
</dbReference>
<dbReference type="InterPro" id="IPR033473">
    <property type="entry name" value="Atos-like_C"/>
</dbReference>
<dbReference type="InterPro" id="IPR025261">
    <property type="entry name" value="Atos-like_cons_dom"/>
</dbReference>
<dbReference type="InterPro" id="IPR051506">
    <property type="entry name" value="ATOS_Transcription_Regulators"/>
</dbReference>
<dbReference type="PANTHER" id="PTHR13199:SF13">
    <property type="entry name" value="ATOS HOMOLOG PROTEIN A"/>
    <property type="match status" value="1"/>
</dbReference>
<dbReference type="PANTHER" id="PTHR13199">
    <property type="entry name" value="GH03947P"/>
    <property type="match status" value="1"/>
</dbReference>
<dbReference type="Pfam" id="PF13889">
    <property type="entry name" value="Chromosome_seg"/>
    <property type="match status" value="1"/>
</dbReference>
<dbReference type="Pfam" id="PF13915">
    <property type="entry name" value="DUF4210"/>
    <property type="match status" value="1"/>
</dbReference>
<dbReference type="SMART" id="SM01177">
    <property type="entry name" value="DUF4210"/>
    <property type="match status" value="1"/>
</dbReference>